<protein>
    <recommendedName>
        <fullName>Cycloviolacin-O15</fullName>
    </recommendedName>
</protein>
<organism>
    <name type="scientific">Viola odorata</name>
    <name type="common">Sweet violet</name>
    <dbReference type="NCBI Taxonomy" id="97441"/>
    <lineage>
        <taxon>Eukaryota</taxon>
        <taxon>Viridiplantae</taxon>
        <taxon>Streptophyta</taxon>
        <taxon>Embryophyta</taxon>
        <taxon>Tracheophyta</taxon>
        <taxon>Spermatophyta</taxon>
        <taxon>Magnoliopsida</taxon>
        <taxon>eudicotyledons</taxon>
        <taxon>Gunneridae</taxon>
        <taxon>Pentapetalae</taxon>
        <taxon>rosids</taxon>
        <taxon>fabids</taxon>
        <taxon>Malpighiales</taxon>
        <taxon>Violaceae</taxon>
        <taxon>Viola</taxon>
        <taxon>Viola subgen. Viola</taxon>
        <taxon>Viola sect. Viola</taxon>
        <taxon>Viola subsect. Viola</taxon>
    </lineage>
</organism>
<reference evidence="4" key="1">
    <citation type="journal article" date="2006" name="Biochem. J.">
        <title>A novel suite of cyclotides from Viola odorata: sequence variation and the implications for structure, function and stability.</title>
        <authorList>
            <person name="Ireland D.C."/>
            <person name="Colgrave M.L."/>
            <person name="Craik D.J."/>
        </authorList>
    </citation>
    <scope>PROTEIN SEQUENCE</scope>
    <scope>FUNCTION</scope>
    <scope>MASS SPECTROMETRY</scope>
</reference>
<sequence>GLVPCGETCFTGKCYTPGCSCSYPICKKN</sequence>
<feature type="peptide" id="PRO_0000294944" description="Cycloviolacin-O15" evidence="2 3">
    <location>
        <begin position="1"/>
        <end position="29"/>
    </location>
</feature>
<feature type="disulfide bond" evidence="1 2">
    <location>
        <begin position="5"/>
        <end position="19"/>
    </location>
</feature>
<feature type="disulfide bond" evidence="1 2">
    <location>
        <begin position="9"/>
        <end position="21"/>
    </location>
</feature>
<feature type="disulfide bond" evidence="1 2">
    <location>
        <begin position="14"/>
        <end position="26"/>
    </location>
</feature>
<feature type="cross-link" description="Cyclopeptide (Gly-Asn)" evidence="3">
    <location>
        <begin position="1"/>
        <end position="29"/>
    </location>
</feature>
<evidence type="ECO:0000250" key="1">
    <source>
        <dbReference type="UniProtKB" id="P58446"/>
    </source>
</evidence>
<evidence type="ECO:0000255" key="2">
    <source>
        <dbReference type="PROSITE-ProRule" id="PRU00395"/>
    </source>
</evidence>
<evidence type="ECO:0000269" key="3">
    <source>
    </source>
</evidence>
<evidence type="ECO:0000305" key="4"/>
<proteinExistence type="evidence at protein level"/>
<keyword id="KW-0204">Cytolysis</keyword>
<keyword id="KW-0903">Direct protein sequencing</keyword>
<keyword id="KW-1015">Disulfide bond</keyword>
<keyword id="KW-0354">Hemolysis</keyword>
<keyword id="KW-0960">Knottin</keyword>
<keyword id="KW-0611">Plant defense</keyword>
<comment type="function">
    <text evidence="2 3 4">Probably participates in a plant defense mechanism. Has hemolytic activity.</text>
</comment>
<comment type="domain">
    <text evidence="1">The presence of a 'disulfide through disulfide knot' structurally defines this protein as a knottin.</text>
</comment>
<comment type="PTM">
    <text evidence="2 3">This is a cyclic peptide.</text>
</comment>
<comment type="mass spectrometry"/>
<comment type="similarity">
    <text evidence="2">Belongs to the cyclotide family. Moebius subfamily.</text>
</comment>
<comment type="caution">
    <text evidence="3">This peptide is cyclic. The start position was chosen by similarity to OAK1 (kalata-B1) for which the DNA sequence is known.</text>
</comment>
<dbReference type="SMR" id="P85178"/>
<dbReference type="GO" id="GO:0006952">
    <property type="term" value="P:defense response"/>
    <property type="evidence" value="ECO:0007669"/>
    <property type="project" value="UniProtKB-KW"/>
</dbReference>
<dbReference type="GO" id="GO:0031640">
    <property type="term" value="P:killing of cells of another organism"/>
    <property type="evidence" value="ECO:0007669"/>
    <property type="project" value="UniProtKB-KW"/>
</dbReference>
<dbReference type="InterPro" id="IPR005535">
    <property type="entry name" value="Cyclotide"/>
</dbReference>
<dbReference type="InterPro" id="IPR012324">
    <property type="entry name" value="Cyclotide_moebius_CS"/>
</dbReference>
<dbReference type="InterPro" id="IPR036146">
    <property type="entry name" value="Cyclotide_sf"/>
</dbReference>
<dbReference type="Pfam" id="PF03784">
    <property type="entry name" value="Cyclotide"/>
    <property type="match status" value="1"/>
</dbReference>
<dbReference type="PIRSF" id="PIRSF037891">
    <property type="entry name" value="Cycloviolacin"/>
    <property type="match status" value="1"/>
</dbReference>
<dbReference type="SUPFAM" id="SSF57038">
    <property type="entry name" value="Cyclotides"/>
    <property type="match status" value="1"/>
</dbReference>
<dbReference type="PROSITE" id="PS51052">
    <property type="entry name" value="CYCLOTIDE"/>
    <property type="match status" value="1"/>
</dbReference>
<dbReference type="PROSITE" id="PS60009">
    <property type="entry name" value="CYCLOTIDE_MOEBIUS"/>
    <property type="match status" value="1"/>
</dbReference>
<name>CYO15_VIOOD</name>
<accession>P85178</accession>